<keyword id="KW-0106">Calcium</keyword>
<keyword id="KW-0148">Chlorophyll</keyword>
<keyword id="KW-0150">Chloroplast</keyword>
<keyword id="KW-0157">Chromophore</keyword>
<keyword id="KW-0249">Electron transport</keyword>
<keyword id="KW-0359">Herbicide resistance</keyword>
<keyword id="KW-0408">Iron</keyword>
<keyword id="KW-0460">Magnesium</keyword>
<keyword id="KW-0464">Manganese</keyword>
<keyword id="KW-0472">Membrane</keyword>
<keyword id="KW-0479">Metal-binding</keyword>
<keyword id="KW-0560">Oxidoreductase</keyword>
<keyword id="KW-0602">Photosynthesis</keyword>
<keyword id="KW-0604">Photosystem II</keyword>
<keyword id="KW-0934">Plastid</keyword>
<keyword id="KW-0793">Thylakoid</keyword>
<keyword id="KW-0812">Transmembrane</keyword>
<keyword id="KW-1133">Transmembrane helix</keyword>
<keyword id="KW-0813">Transport</keyword>
<geneLocation type="chloroplast"/>
<proteinExistence type="inferred from homology"/>
<reference key="1">
    <citation type="journal article" date="1991" name="Curr. Genet.">
        <title>Structural similarities between psbA genes from red and brown algae.</title>
        <authorList>
            <person name="Winhauer T."/>
            <person name="Jaeger S."/>
            <person name="Valentin K.-U."/>
            <person name="Zetsche K."/>
        </authorList>
    </citation>
    <scope>NUCLEOTIDE SEQUENCE [GENOMIC DNA]</scope>
    <source>
        <strain>Dillwyn / Lyngbye</strain>
    </source>
</reference>
<gene>
    <name evidence="1" type="primary">psbA</name>
</gene>
<organism>
    <name type="scientific">Ectocarpus siliculosus</name>
    <name type="common">Brown alga</name>
    <name type="synonym">Conferva siliculosa</name>
    <dbReference type="NCBI Taxonomy" id="2880"/>
    <lineage>
        <taxon>Eukaryota</taxon>
        <taxon>Sar</taxon>
        <taxon>Stramenopiles</taxon>
        <taxon>Ochrophyta</taxon>
        <taxon>PX clade</taxon>
        <taxon>Phaeophyceae</taxon>
        <taxon>Ectocarpales</taxon>
        <taxon>Ectocarpaceae</taxon>
        <taxon>Ectocarpus</taxon>
    </lineage>
</organism>
<feature type="chain" id="PRO_0000090439" description="Photosystem II protein D1" evidence="1">
    <location>
        <begin position="1"/>
        <end position="344"/>
    </location>
</feature>
<feature type="propeptide" id="PRO_0000316516" evidence="1">
    <location>
        <begin position="345"/>
        <end position="360"/>
    </location>
</feature>
<feature type="transmembrane region" description="Helical" evidence="1">
    <location>
        <begin position="29"/>
        <end position="46"/>
    </location>
</feature>
<feature type="transmembrane region" description="Helical" evidence="1">
    <location>
        <begin position="118"/>
        <end position="133"/>
    </location>
</feature>
<feature type="transmembrane region" description="Helical" evidence="1">
    <location>
        <begin position="142"/>
        <end position="156"/>
    </location>
</feature>
<feature type="transmembrane region" description="Helical" evidence="1">
    <location>
        <begin position="197"/>
        <end position="218"/>
    </location>
</feature>
<feature type="transmembrane region" description="Helical" evidence="1">
    <location>
        <begin position="274"/>
        <end position="288"/>
    </location>
</feature>
<feature type="binding site" description="axial binding residue" evidence="1">
    <location>
        <position position="118"/>
    </location>
    <ligand>
        <name>chlorophyll a</name>
        <dbReference type="ChEBI" id="CHEBI:58416"/>
        <label>ChlzD1</label>
    </ligand>
    <ligandPart>
        <name>Mg</name>
        <dbReference type="ChEBI" id="CHEBI:25107"/>
    </ligandPart>
</feature>
<feature type="binding site" evidence="1">
    <location>
        <position position="126"/>
    </location>
    <ligand>
        <name>pheophytin a</name>
        <dbReference type="ChEBI" id="CHEBI:136840"/>
        <label>D1</label>
    </ligand>
</feature>
<feature type="binding site" evidence="1">
    <location>
        <position position="170"/>
    </location>
    <ligand>
        <name>[CaMn4O5] cluster</name>
        <dbReference type="ChEBI" id="CHEBI:189552"/>
    </ligand>
</feature>
<feature type="binding site" evidence="1">
    <location>
        <position position="189"/>
    </location>
    <ligand>
        <name>[CaMn4O5] cluster</name>
        <dbReference type="ChEBI" id="CHEBI:189552"/>
    </ligand>
</feature>
<feature type="binding site" description="axial binding residue" evidence="1">
    <location>
        <position position="198"/>
    </location>
    <ligand>
        <name>chlorophyll a</name>
        <dbReference type="ChEBI" id="CHEBI:58416"/>
        <label>PD1</label>
    </ligand>
    <ligandPart>
        <name>Mg</name>
        <dbReference type="ChEBI" id="CHEBI:25107"/>
    </ligandPart>
</feature>
<feature type="binding site" evidence="1">
    <location>
        <position position="215"/>
    </location>
    <ligand>
        <name>a quinone</name>
        <dbReference type="ChEBI" id="CHEBI:132124"/>
        <label>B</label>
    </ligand>
</feature>
<feature type="binding site" evidence="1">
    <location>
        <position position="215"/>
    </location>
    <ligand>
        <name>Fe cation</name>
        <dbReference type="ChEBI" id="CHEBI:24875"/>
        <note>ligand shared with heterodimeric partner</note>
    </ligand>
</feature>
<feature type="binding site" evidence="1">
    <location>
        <begin position="264"/>
        <end position="265"/>
    </location>
    <ligand>
        <name>a quinone</name>
        <dbReference type="ChEBI" id="CHEBI:132124"/>
        <label>B</label>
    </ligand>
</feature>
<feature type="binding site" evidence="1">
    <location>
        <position position="272"/>
    </location>
    <ligand>
        <name>Fe cation</name>
        <dbReference type="ChEBI" id="CHEBI:24875"/>
        <note>ligand shared with heterodimeric partner</note>
    </ligand>
</feature>
<feature type="binding site" evidence="1">
    <location>
        <position position="332"/>
    </location>
    <ligand>
        <name>[CaMn4O5] cluster</name>
        <dbReference type="ChEBI" id="CHEBI:189552"/>
    </ligand>
</feature>
<feature type="binding site" evidence="1">
    <location>
        <position position="333"/>
    </location>
    <ligand>
        <name>[CaMn4O5] cluster</name>
        <dbReference type="ChEBI" id="CHEBI:189552"/>
    </ligand>
</feature>
<feature type="binding site" evidence="1">
    <location>
        <position position="342"/>
    </location>
    <ligand>
        <name>[CaMn4O5] cluster</name>
        <dbReference type="ChEBI" id="CHEBI:189552"/>
    </ligand>
</feature>
<feature type="binding site" evidence="1">
    <location>
        <position position="344"/>
    </location>
    <ligand>
        <name>[CaMn4O5] cluster</name>
        <dbReference type="ChEBI" id="CHEBI:189552"/>
    </ligand>
</feature>
<feature type="site" description="Tyrosine radical intermediate" evidence="1">
    <location>
        <position position="161"/>
    </location>
</feature>
<feature type="site" description="Stabilizes free radical intermediate" evidence="1">
    <location>
        <position position="190"/>
    </location>
</feature>
<feature type="site" description="Cleavage; by CTPA" evidence="1">
    <location>
        <begin position="344"/>
        <end position="345"/>
    </location>
</feature>
<sequence length="360" mass="39688">MVATLERREEKRDWGTFATWITSTENRLYIGWFGCLMIPTLLTAASCYIIAFIAAPPVDIDGIREPVAGSLLYGNNIISGAVIPSSNAIGIHFYPIWEAASIEEWLYNGGPYQLIVFHFLIGVACWMGREWELSYRLGMRPWIFVAFSAPVAAASAVFLVYPIGQGSFSDGMPLGISGTFNFMIVFQAEHNILMRPFHMAGVAGVFGGSLFSAMHGSLVTSSLIRETSEVESVNYGYKFGQEEETYNIVAAHGYFGRLIFQYASFNNSRALHFFLAAWPVVGIWLTALGVSTMAFNLNGFNFNQSVVDSEGRVINTWADIINRADLGMEVMHERNAHNFPLDLASNEILPVAISAPSVVG</sequence>
<accession>P24726</accession>
<evidence type="ECO:0000255" key="1">
    <source>
        <dbReference type="HAMAP-Rule" id="MF_01379"/>
    </source>
</evidence>
<protein>
    <recommendedName>
        <fullName evidence="1">Photosystem II protein D1</fullName>
        <shortName evidence="1">PSII D1 protein</shortName>
        <ecNumber evidence="1">1.10.3.9</ecNumber>
    </recommendedName>
    <alternativeName>
        <fullName evidence="1">Photosystem II Q(B) protein</fullName>
    </alternativeName>
</protein>
<dbReference type="EC" id="1.10.3.9" evidence="1"/>
<dbReference type="EMBL" id="X56695">
    <property type="protein sequence ID" value="CAA40023.1"/>
    <property type="molecule type" value="Genomic_DNA"/>
</dbReference>
<dbReference type="PIR" id="S32576">
    <property type="entry name" value="S32576"/>
</dbReference>
<dbReference type="SMR" id="P24726"/>
<dbReference type="eggNOG" id="ENOG502QR09">
    <property type="taxonomic scope" value="Eukaryota"/>
</dbReference>
<dbReference type="GO" id="GO:0009535">
    <property type="term" value="C:chloroplast thylakoid membrane"/>
    <property type="evidence" value="ECO:0007669"/>
    <property type="project" value="UniProtKB-SubCell"/>
</dbReference>
<dbReference type="GO" id="GO:0009523">
    <property type="term" value="C:photosystem II"/>
    <property type="evidence" value="ECO:0007669"/>
    <property type="project" value="UniProtKB-KW"/>
</dbReference>
<dbReference type="GO" id="GO:0016168">
    <property type="term" value="F:chlorophyll binding"/>
    <property type="evidence" value="ECO:0007669"/>
    <property type="project" value="UniProtKB-UniRule"/>
</dbReference>
<dbReference type="GO" id="GO:0045156">
    <property type="term" value="F:electron transporter, transferring electrons within the cyclic electron transport pathway of photosynthesis activity"/>
    <property type="evidence" value="ECO:0007669"/>
    <property type="project" value="InterPro"/>
</dbReference>
<dbReference type="GO" id="GO:0005506">
    <property type="term" value="F:iron ion binding"/>
    <property type="evidence" value="ECO:0007669"/>
    <property type="project" value="UniProtKB-UniRule"/>
</dbReference>
<dbReference type="GO" id="GO:0016682">
    <property type="term" value="F:oxidoreductase activity, acting on diphenols and related substances as donors, oxygen as acceptor"/>
    <property type="evidence" value="ECO:0007669"/>
    <property type="project" value="UniProtKB-UniRule"/>
</dbReference>
<dbReference type="GO" id="GO:0009772">
    <property type="term" value="P:photosynthetic electron transport in photosystem II"/>
    <property type="evidence" value="ECO:0007669"/>
    <property type="project" value="InterPro"/>
</dbReference>
<dbReference type="GO" id="GO:0009635">
    <property type="term" value="P:response to herbicide"/>
    <property type="evidence" value="ECO:0007669"/>
    <property type="project" value="UniProtKB-KW"/>
</dbReference>
<dbReference type="FunFam" id="1.20.85.10:FF:000002">
    <property type="entry name" value="Photosystem II protein D1"/>
    <property type="match status" value="1"/>
</dbReference>
<dbReference type="Gene3D" id="1.20.85.10">
    <property type="entry name" value="Photosystem II protein D1-like"/>
    <property type="match status" value="1"/>
</dbReference>
<dbReference type="HAMAP" id="MF_01379">
    <property type="entry name" value="PSII_PsbA_D1"/>
    <property type="match status" value="1"/>
</dbReference>
<dbReference type="InterPro" id="IPR055266">
    <property type="entry name" value="D1/D2"/>
</dbReference>
<dbReference type="InterPro" id="IPR036854">
    <property type="entry name" value="Photo_II_D1/D2_sf"/>
</dbReference>
<dbReference type="InterPro" id="IPR000484">
    <property type="entry name" value="Photo_RC_L/M"/>
</dbReference>
<dbReference type="InterPro" id="IPR055265">
    <property type="entry name" value="Photo_RC_L/M_CS"/>
</dbReference>
<dbReference type="InterPro" id="IPR005867">
    <property type="entry name" value="PSII_D1"/>
</dbReference>
<dbReference type="NCBIfam" id="TIGR01151">
    <property type="entry name" value="psbA"/>
    <property type="match status" value="1"/>
</dbReference>
<dbReference type="PANTHER" id="PTHR33149:SF12">
    <property type="entry name" value="PHOTOSYSTEM II D2 PROTEIN"/>
    <property type="match status" value="1"/>
</dbReference>
<dbReference type="PANTHER" id="PTHR33149">
    <property type="entry name" value="PHOTOSYSTEM II PROTEIN D1"/>
    <property type="match status" value="1"/>
</dbReference>
<dbReference type="Pfam" id="PF00124">
    <property type="entry name" value="Photo_RC"/>
    <property type="match status" value="1"/>
</dbReference>
<dbReference type="PRINTS" id="PR00256">
    <property type="entry name" value="REACTNCENTRE"/>
</dbReference>
<dbReference type="SUPFAM" id="SSF81483">
    <property type="entry name" value="Bacterial photosystem II reaction centre, L and M subunits"/>
    <property type="match status" value="1"/>
</dbReference>
<dbReference type="PROSITE" id="PS00244">
    <property type="entry name" value="REACTION_CENTER"/>
    <property type="match status" value="1"/>
</dbReference>
<name>PSBA_ECTSI</name>
<comment type="function">
    <text evidence="1">Photosystem II (PSII) is a light-driven water:plastoquinone oxidoreductase that uses light energy to abstract electrons from H(2)O, generating O(2) and a proton gradient subsequently used for ATP formation. It consists of a core antenna complex that captures photons, and an electron transfer chain that converts photonic excitation into a charge separation. The D1/D2 (PsbA/PsbD) reaction center heterodimer binds P680, the primary electron donor of PSII as well as several subsequent electron acceptors.</text>
</comment>
<comment type="catalytic activity">
    <reaction evidence="1">
        <text>2 a plastoquinone + 4 hnu + 2 H2O = 2 a plastoquinol + O2</text>
        <dbReference type="Rhea" id="RHEA:36359"/>
        <dbReference type="Rhea" id="RHEA-COMP:9561"/>
        <dbReference type="Rhea" id="RHEA-COMP:9562"/>
        <dbReference type="ChEBI" id="CHEBI:15377"/>
        <dbReference type="ChEBI" id="CHEBI:15379"/>
        <dbReference type="ChEBI" id="CHEBI:17757"/>
        <dbReference type="ChEBI" id="CHEBI:30212"/>
        <dbReference type="ChEBI" id="CHEBI:62192"/>
        <dbReference type="EC" id="1.10.3.9"/>
    </reaction>
</comment>
<comment type="cofactor">
    <text evidence="1">The D1/D2 heterodimer binds P680, chlorophylls that are the primary electron donor of PSII, and subsequent electron acceptors. It shares a non-heme iron and each subunit binds pheophytin, quinone, additional chlorophylls, carotenoids and lipids. D1 provides most of the ligands for the Mn4-Ca-O5 cluster of the oxygen-evolving complex (OEC). There is also a Cl(-1) ion associated with D1 and D2, which is required for oxygen evolution. The PSII complex binds additional chlorophylls, carotenoids and specific lipids.</text>
</comment>
<comment type="subunit">
    <text evidence="1">PSII is composed of 1 copy each of membrane proteins PsbA, PsbB, PsbC, PsbD, PsbE, PsbF, PsbH, PsbI, PsbJ, PsbK, PsbL, PsbM, PsbT, PsbX, PsbY, PsbZ, Psb30/Ycf12, at least 3 peripheral proteins of the oxygen-evolving complex and a large number of cofactors. It forms dimeric complexes.</text>
</comment>
<comment type="subcellular location">
    <subcellularLocation>
        <location evidence="1">Plastid</location>
        <location evidence="1">Chloroplast thylakoid membrane</location>
        <topology evidence="1">Multi-pass membrane protein</topology>
    </subcellularLocation>
</comment>
<comment type="PTM">
    <text evidence="1">Tyr-161 forms a radical intermediate that is referred to as redox-active TyrZ, YZ or Y-Z.</text>
</comment>
<comment type="PTM">
    <text evidence="1">C-terminally processed by CTPA; processing is essential to allow assembly of the oxygen-evolving complex and thus photosynthetic growth.</text>
</comment>
<comment type="miscellaneous">
    <text evidence="1">2 of the reaction center chlorophylls (ChlD1 and ChlD2) are entirely coordinated by water.</text>
</comment>
<comment type="miscellaneous">
    <text evidence="1">Herbicides such as atrazine, BNT, diuron or ioxynil bind in the Q(B) binding site and block subsequent electron transfer.</text>
</comment>
<comment type="similarity">
    <text evidence="1">Belongs to the reaction center PufL/M/PsbA/D family.</text>
</comment>